<comment type="function">
    <text evidence="1">NDH-1 shuttles electrons from an unknown electron donor, via FMN and iron-sulfur (Fe-S) centers, to quinones in the respiratory and/or the photosynthetic chain. The immediate electron acceptor for the enzyme in this species is believed to be plastoquinone. Couples the redox reaction to proton translocation, and thus conserves the redox energy in a proton gradient. Cyanobacterial NDH-1 also plays a role in inorganic carbon-concentration.</text>
</comment>
<comment type="catalytic activity">
    <reaction evidence="1">
        <text>a plastoquinone + NADH + (n+1) H(+)(in) = a plastoquinol + NAD(+) + n H(+)(out)</text>
        <dbReference type="Rhea" id="RHEA:42608"/>
        <dbReference type="Rhea" id="RHEA-COMP:9561"/>
        <dbReference type="Rhea" id="RHEA-COMP:9562"/>
        <dbReference type="ChEBI" id="CHEBI:15378"/>
        <dbReference type="ChEBI" id="CHEBI:17757"/>
        <dbReference type="ChEBI" id="CHEBI:57540"/>
        <dbReference type="ChEBI" id="CHEBI:57945"/>
        <dbReference type="ChEBI" id="CHEBI:62192"/>
    </reaction>
</comment>
<comment type="catalytic activity">
    <reaction evidence="1">
        <text>a plastoquinone + NADPH + (n+1) H(+)(in) = a plastoquinol + NADP(+) + n H(+)(out)</text>
        <dbReference type="Rhea" id="RHEA:42612"/>
        <dbReference type="Rhea" id="RHEA-COMP:9561"/>
        <dbReference type="Rhea" id="RHEA-COMP:9562"/>
        <dbReference type="ChEBI" id="CHEBI:15378"/>
        <dbReference type="ChEBI" id="CHEBI:17757"/>
        <dbReference type="ChEBI" id="CHEBI:57783"/>
        <dbReference type="ChEBI" id="CHEBI:58349"/>
        <dbReference type="ChEBI" id="CHEBI:62192"/>
    </reaction>
</comment>
<comment type="cofactor">
    <cofactor evidence="1">
        <name>[4Fe-4S] cluster</name>
        <dbReference type="ChEBI" id="CHEBI:49883"/>
    </cofactor>
    <text evidence="1">Binds 1 [4Fe-4S] cluster.</text>
</comment>
<comment type="subunit">
    <text evidence="1">NDH-1 can be composed of about 15 different subunits; different subcomplexes with different compositions have been identified which probably have different functions.</text>
</comment>
<comment type="subcellular location">
    <subcellularLocation>
        <location evidence="1">Cellular thylakoid membrane</location>
        <topology evidence="1">Peripheral membrane protein</topology>
        <orientation evidence="1">Cytoplasmic side</orientation>
    </subcellularLocation>
</comment>
<comment type="similarity">
    <text evidence="1">Belongs to the complex I 20 kDa subunit family.</text>
</comment>
<reference key="1">
    <citation type="journal article" date="2011" name="MBio">
        <title>Novel metabolic attributes of the genus Cyanothece, comprising a group of unicellular nitrogen-fixing Cyanobacteria.</title>
        <authorList>
            <person name="Bandyopadhyay A."/>
            <person name="Elvitigala T."/>
            <person name="Welsh E."/>
            <person name="Stockel J."/>
            <person name="Liberton M."/>
            <person name="Min H."/>
            <person name="Sherman L.A."/>
            <person name="Pakrasi H.B."/>
        </authorList>
    </citation>
    <scope>NUCLEOTIDE SEQUENCE [LARGE SCALE GENOMIC DNA]</scope>
    <source>
        <strain>PCC 7424</strain>
    </source>
</reference>
<proteinExistence type="inferred from homology"/>
<protein>
    <recommendedName>
        <fullName evidence="1">NAD(P)H-quinone oxidoreductase subunit K</fullName>
        <ecNumber evidence="1">7.1.1.-</ecNumber>
    </recommendedName>
    <alternativeName>
        <fullName evidence="1">NAD(P)H dehydrogenase I subunit K</fullName>
    </alternativeName>
    <alternativeName>
        <fullName evidence="1">NDH-1 subunit K</fullName>
        <shortName evidence="1">NDH-K</shortName>
    </alternativeName>
</protein>
<feature type="chain" id="PRO_0000376186" description="NAD(P)H-quinone oxidoreductase subunit K">
    <location>
        <begin position="1"/>
        <end position="247"/>
    </location>
</feature>
<feature type="binding site" evidence="1">
    <location>
        <position position="63"/>
    </location>
    <ligand>
        <name>[4Fe-4S] cluster</name>
        <dbReference type="ChEBI" id="CHEBI:49883"/>
    </ligand>
</feature>
<feature type="binding site" evidence="1">
    <location>
        <position position="64"/>
    </location>
    <ligand>
        <name>[4Fe-4S] cluster</name>
        <dbReference type="ChEBI" id="CHEBI:49883"/>
    </ligand>
</feature>
<feature type="binding site" evidence="1">
    <location>
        <position position="128"/>
    </location>
    <ligand>
        <name>[4Fe-4S] cluster</name>
        <dbReference type="ChEBI" id="CHEBI:49883"/>
    </ligand>
</feature>
<feature type="binding site" evidence="1">
    <location>
        <position position="159"/>
    </location>
    <ligand>
        <name>[4Fe-4S] cluster</name>
        <dbReference type="ChEBI" id="CHEBI:49883"/>
    </ligand>
</feature>
<accession>B7KJ51</accession>
<organism>
    <name type="scientific">Gloeothece citriformis (strain PCC 7424)</name>
    <name type="common">Cyanothece sp. (strain PCC 7424)</name>
    <dbReference type="NCBI Taxonomy" id="65393"/>
    <lineage>
        <taxon>Bacteria</taxon>
        <taxon>Bacillati</taxon>
        <taxon>Cyanobacteriota</taxon>
        <taxon>Cyanophyceae</taxon>
        <taxon>Oscillatoriophycideae</taxon>
        <taxon>Chroococcales</taxon>
        <taxon>Aphanothecaceae</taxon>
        <taxon>Gloeothece</taxon>
        <taxon>Gloeothece citriformis</taxon>
    </lineage>
</organism>
<keyword id="KW-0004">4Fe-4S</keyword>
<keyword id="KW-0408">Iron</keyword>
<keyword id="KW-0411">Iron-sulfur</keyword>
<keyword id="KW-0472">Membrane</keyword>
<keyword id="KW-0479">Metal-binding</keyword>
<keyword id="KW-0520">NAD</keyword>
<keyword id="KW-0521">NADP</keyword>
<keyword id="KW-0618">Plastoquinone</keyword>
<keyword id="KW-0874">Quinone</keyword>
<keyword id="KW-1185">Reference proteome</keyword>
<keyword id="KW-0793">Thylakoid</keyword>
<keyword id="KW-1278">Translocase</keyword>
<keyword id="KW-0813">Transport</keyword>
<dbReference type="EC" id="7.1.1.-" evidence="1"/>
<dbReference type="EMBL" id="CP001291">
    <property type="protein sequence ID" value="ACK72135.1"/>
    <property type="molecule type" value="Genomic_DNA"/>
</dbReference>
<dbReference type="RefSeq" id="WP_015955727.1">
    <property type="nucleotide sequence ID" value="NC_011729.1"/>
</dbReference>
<dbReference type="SMR" id="B7KJ51"/>
<dbReference type="STRING" id="65393.PCC7424_3754"/>
<dbReference type="KEGG" id="cyc:PCC7424_3754"/>
<dbReference type="eggNOG" id="COG0377">
    <property type="taxonomic scope" value="Bacteria"/>
</dbReference>
<dbReference type="HOGENOM" id="CLU_055737_2_1_3"/>
<dbReference type="OrthoDB" id="9786737at2"/>
<dbReference type="Proteomes" id="UP000002384">
    <property type="component" value="Chromosome"/>
</dbReference>
<dbReference type="GO" id="GO:0031676">
    <property type="term" value="C:plasma membrane-derived thylakoid membrane"/>
    <property type="evidence" value="ECO:0007669"/>
    <property type="project" value="UniProtKB-SubCell"/>
</dbReference>
<dbReference type="GO" id="GO:0045271">
    <property type="term" value="C:respiratory chain complex I"/>
    <property type="evidence" value="ECO:0007669"/>
    <property type="project" value="TreeGrafter"/>
</dbReference>
<dbReference type="GO" id="GO:0051539">
    <property type="term" value="F:4 iron, 4 sulfur cluster binding"/>
    <property type="evidence" value="ECO:0007669"/>
    <property type="project" value="UniProtKB-KW"/>
</dbReference>
<dbReference type="GO" id="GO:0005506">
    <property type="term" value="F:iron ion binding"/>
    <property type="evidence" value="ECO:0007669"/>
    <property type="project" value="UniProtKB-UniRule"/>
</dbReference>
<dbReference type="GO" id="GO:0008137">
    <property type="term" value="F:NADH dehydrogenase (ubiquinone) activity"/>
    <property type="evidence" value="ECO:0007669"/>
    <property type="project" value="InterPro"/>
</dbReference>
<dbReference type="GO" id="GO:0048038">
    <property type="term" value="F:quinone binding"/>
    <property type="evidence" value="ECO:0007669"/>
    <property type="project" value="UniProtKB-KW"/>
</dbReference>
<dbReference type="GO" id="GO:0009060">
    <property type="term" value="P:aerobic respiration"/>
    <property type="evidence" value="ECO:0007669"/>
    <property type="project" value="TreeGrafter"/>
</dbReference>
<dbReference type="GO" id="GO:0015990">
    <property type="term" value="P:electron transport coupled proton transport"/>
    <property type="evidence" value="ECO:0007669"/>
    <property type="project" value="TreeGrafter"/>
</dbReference>
<dbReference type="GO" id="GO:0019684">
    <property type="term" value="P:photosynthesis, light reaction"/>
    <property type="evidence" value="ECO:0007669"/>
    <property type="project" value="UniProtKB-UniRule"/>
</dbReference>
<dbReference type="FunFam" id="3.40.50.12280:FF:000003">
    <property type="entry name" value="NAD(P)H-quinone oxidoreductase subunit K, chloroplastic"/>
    <property type="match status" value="1"/>
</dbReference>
<dbReference type="Gene3D" id="3.40.50.12280">
    <property type="match status" value="1"/>
</dbReference>
<dbReference type="HAMAP" id="MF_01356">
    <property type="entry name" value="NDH1_NuoB"/>
    <property type="match status" value="1"/>
</dbReference>
<dbReference type="InterPro" id="IPR006137">
    <property type="entry name" value="NADH_UbQ_OxRdtase-like_20kDa"/>
</dbReference>
<dbReference type="InterPro" id="IPR006138">
    <property type="entry name" value="NADH_UQ_OxRdtase_20Kd_su"/>
</dbReference>
<dbReference type="NCBIfam" id="TIGR01957">
    <property type="entry name" value="nuoB_fam"/>
    <property type="match status" value="1"/>
</dbReference>
<dbReference type="NCBIfam" id="NF005012">
    <property type="entry name" value="PRK06411.1"/>
    <property type="match status" value="1"/>
</dbReference>
<dbReference type="PANTHER" id="PTHR11995">
    <property type="entry name" value="NADH DEHYDROGENASE"/>
    <property type="match status" value="1"/>
</dbReference>
<dbReference type="PANTHER" id="PTHR11995:SF14">
    <property type="entry name" value="NADH DEHYDROGENASE [UBIQUINONE] IRON-SULFUR PROTEIN 7, MITOCHONDRIAL"/>
    <property type="match status" value="1"/>
</dbReference>
<dbReference type="Pfam" id="PF01058">
    <property type="entry name" value="Oxidored_q6"/>
    <property type="match status" value="1"/>
</dbReference>
<dbReference type="SUPFAM" id="SSF56770">
    <property type="entry name" value="HydA/Nqo6-like"/>
    <property type="match status" value="1"/>
</dbReference>
<dbReference type="PROSITE" id="PS01150">
    <property type="entry name" value="COMPLEX1_20K"/>
    <property type="match status" value="1"/>
</dbReference>
<sequence>MSPNLTSSSDLFTQEQKEKLLNPINHSQVTQDLSENVILTTVDDLYNWARLSSLWPLLYGTACCFIEFAALIGSRFDFDRFGLVPRSSPRQADLIITAGTITMKMAPALVRLYEQMPDPKYVIAMGACTITGGMFSSDSTTAVRGVDKLIPVDVYIPGCPPRPEAIFDAIVKLRKKVANDSIQVRPEQNHRYYSTTHTMKATSPILTGQYLRAQTRQAPPLELSEAMGMPIPPALMTTEQKEEVDRG</sequence>
<gene>
    <name evidence="1" type="primary">ndhK</name>
    <name type="ordered locus">PCC7424_3754</name>
</gene>
<name>NDHK_GLOC7</name>
<evidence type="ECO:0000255" key="1">
    <source>
        <dbReference type="HAMAP-Rule" id="MF_01356"/>
    </source>
</evidence>